<comment type="function">
    <text evidence="1">Catalyzes the radical-mediated insertion of two sulfur atoms into the C-6 and C-8 positions of the octanoyl moiety bound to the lipoyl domains of lipoate-dependent enzymes, thereby converting the octanoylated domains into lipoylated derivatives.</text>
</comment>
<comment type="catalytic activity">
    <reaction evidence="1">
        <text>[[Fe-S] cluster scaffold protein carrying a second [4Fe-4S](2+) cluster] + N(6)-octanoyl-L-lysyl-[protein] + 2 oxidized [2Fe-2S]-[ferredoxin] + 2 S-adenosyl-L-methionine + 4 H(+) = [[Fe-S] cluster scaffold protein] + N(6)-[(R)-dihydrolipoyl]-L-lysyl-[protein] + 4 Fe(3+) + 2 hydrogen sulfide + 2 5'-deoxyadenosine + 2 L-methionine + 2 reduced [2Fe-2S]-[ferredoxin]</text>
        <dbReference type="Rhea" id="RHEA:16585"/>
        <dbReference type="Rhea" id="RHEA-COMP:9928"/>
        <dbReference type="Rhea" id="RHEA-COMP:10000"/>
        <dbReference type="Rhea" id="RHEA-COMP:10001"/>
        <dbReference type="Rhea" id="RHEA-COMP:10475"/>
        <dbReference type="Rhea" id="RHEA-COMP:14568"/>
        <dbReference type="Rhea" id="RHEA-COMP:14569"/>
        <dbReference type="ChEBI" id="CHEBI:15378"/>
        <dbReference type="ChEBI" id="CHEBI:17319"/>
        <dbReference type="ChEBI" id="CHEBI:29034"/>
        <dbReference type="ChEBI" id="CHEBI:29919"/>
        <dbReference type="ChEBI" id="CHEBI:33722"/>
        <dbReference type="ChEBI" id="CHEBI:33737"/>
        <dbReference type="ChEBI" id="CHEBI:33738"/>
        <dbReference type="ChEBI" id="CHEBI:57844"/>
        <dbReference type="ChEBI" id="CHEBI:59789"/>
        <dbReference type="ChEBI" id="CHEBI:78809"/>
        <dbReference type="ChEBI" id="CHEBI:83100"/>
        <dbReference type="EC" id="2.8.1.8"/>
    </reaction>
</comment>
<comment type="cofactor">
    <cofactor evidence="1">
        <name>[4Fe-4S] cluster</name>
        <dbReference type="ChEBI" id="CHEBI:49883"/>
    </cofactor>
    <text evidence="1">Binds 2 [4Fe-4S] clusters per subunit. One cluster is coordinated with 3 cysteines and an exchangeable S-adenosyl-L-methionine.</text>
</comment>
<comment type="pathway">
    <text evidence="1">Protein modification; protein lipoylation via endogenous pathway; protein N(6)-(lipoyl)lysine from octanoyl-[acyl-carrier-protein]: step 2/2.</text>
</comment>
<comment type="subcellular location">
    <subcellularLocation>
        <location evidence="1">Cytoplasm</location>
    </subcellularLocation>
</comment>
<comment type="similarity">
    <text evidence="1">Belongs to the radical SAM superfamily. Lipoyl synthase family.</text>
</comment>
<gene>
    <name evidence="1" type="primary">lipA</name>
    <name type="ordered locus">CGSHiEE_03180</name>
</gene>
<proteinExistence type="inferred from homology"/>
<evidence type="ECO:0000255" key="1">
    <source>
        <dbReference type="HAMAP-Rule" id="MF_00206"/>
    </source>
</evidence>
<evidence type="ECO:0000255" key="2">
    <source>
        <dbReference type="PROSITE-ProRule" id="PRU01266"/>
    </source>
</evidence>
<accession>A5UBB2</accession>
<organism>
    <name type="scientific">Haemophilus influenzae (strain PittEE)</name>
    <dbReference type="NCBI Taxonomy" id="374930"/>
    <lineage>
        <taxon>Bacteria</taxon>
        <taxon>Pseudomonadati</taxon>
        <taxon>Pseudomonadota</taxon>
        <taxon>Gammaproteobacteria</taxon>
        <taxon>Pasteurellales</taxon>
        <taxon>Pasteurellaceae</taxon>
        <taxon>Haemophilus</taxon>
    </lineage>
</organism>
<name>LIPA_HAEIE</name>
<dbReference type="EC" id="2.8.1.8" evidence="1"/>
<dbReference type="EMBL" id="CP000671">
    <property type="protein sequence ID" value="ABQ98063.1"/>
    <property type="molecule type" value="Genomic_DNA"/>
</dbReference>
<dbReference type="SMR" id="A5UBB2"/>
<dbReference type="KEGG" id="hip:CGSHiEE_03180"/>
<dbReference type="HOGENOM" id="CLU_033144_2_1_6"/>
<dbReference type="UniPathway" id="UPA00538">
    <property type="reaction ID" value="UER00593"/>
</dbReference>
<dbReference type="GO" id="GO:0005737">
    <property type="term" value="C:cytoplasm"/>
    <property type="evidence" value="ECO:0007669"/>
    <property type="project" value="UniProtKB-SubCell"/>
</dbReference>
<dbReference type="GO" id="GO:0051539">
    <property type="term" value="F:4 iron, 4 sulfur cluster binding"/>
    <property type="evidence" value="ECO:0007669"/>
    <property type="project" value="UniProtKB-UniRule"/>
</dbReference>
<dbReference type="GO" id="GO:0016992">
    <property type="term" value="F:lipoate synthase activity"/>
    <property type="evidence" value="ECO:0007669"/>
    <property type="project" value="UniProtKB-UniRule"/>
</dbReference>
<dbReference type="GO" id="GO:0046872">
    <property type="term" value="F:metal ion binding"/>
    <property type="evidence" value="ECO:0007669"/>
    <property type="project" value="UniProtKB-KW"/>
</dbReference>
<dbReference type="CDD" id="cd01335">
    <property type="entry name" value="Radical_SAM"/>
    <property type="match status" value="1"/>
</dbReference>
<dbReference type="FunFam" id="3.20.20.70:FF:000023">
    <property type="entry name" value="Lipoyl synthase"/>
    <property type="match status" value="1"/>
</dbReference>
<dbReference type="Gene3D" id="3.20.20.70">
    <property type="entry name" value="Aldolase class I"/>
    <property type="match status" value="1"/>
</dbReference>
<dbReference type="HAMAP" id="MF_00206">
    <property type="entry name" value="Lipoyl_synth"/>
    <property type="match status" value="1"/>
</dbReference>
<dbReference type="InterPro" id="IPR013785">
    <property type="entry name" value="Aldolase_TIM"/>
</dbReference>
<dbReference type="InterPro" id="IPR006638">
    <property type="entry name" value="Elp3/MiaA/NifB-like_rSAM"/>
</dbReference>
<dbReference type="InterPro" id="IPR003698">
    <property type="entry name" value="Lipoyl_synth"/>
</dbReference>
<dbReference type="InterPro" id="IPR007197">
    <property type="entry name" value="rSAM"/>
</dbReference>
<dbReference type="NCBIfam" id="TIGR00510">
    <property type="entry name" value="lipA"/>
    <property type="match status" value="1"/>
</dbReference>
<dbReference type="NCBIfam" id="NF004019">
    <property type="entry name" value="PRK05481.1"/>
    <property type="match status" value="1"/>
</dbReference>
<dbReference type="NCBIfam" id="NF009544">
    <property type="entry name" value="PRK12928.1"/>
    <property type="match status" value="1"/>
</dbReference>
<dbReference type="PANTHER" id="PTHR10949">
    <property type="entry name" value="LIPOYL SYNTHASE"/>
    <property type="match status" value="1"/>
</dbReference>
<dbReference type="PANTHER" id="PTHR10949:SF0">
    <property type="entry name" value="LIPOYL SYNTHASE, MITOCHONDRIAL"/>
    <property type="match status" value="1"/>
</dbReference>
<dbReference type="Pfam" id="PF04055">
    <property type="entry name" value="Radical_SAM"/>
    <property type="match status" value="1"/>
</dbReference>
<dbReference type="PIRSF" id="PIRSF005963">
    <property type="entry name" value="Lipoyl_synth"/>
    <property type="match status" value="1"/>
</dbReference>
<dbReference type="SFLD" id="SFLDF00271">
    <property type="entry name" value="lipoyl_synthase"/>
    <property type="match status" value="1"/>
</dbReference>
<dbReference type="SFLD" id="SFLDS00029">
    <property type="entry name" value="Radical_SAM"/>
    <property type="match status" value="1"/>
</dbReference>
<dbReference type="SMART" id="SM00729">
    <property type="entry name" value="Elp3"/>
    <property type="match status" value="1"/>
</dbReference>
<dbReference type="SUPFAM" id="SSF102114">
    <property type="entry name" value="Radical SAM enzymes"/>
    <property type="match status" value="1"/>
</dbReference>
<dbReference type="PROSITE" id="PS51918">
    <property type="entry name" value="RADICAL_SAM"/>
    <property type="match status" value="1"/>
</dbReference>
<protein>
    <recommendedName>
        <fullName evidence="1">Lipoyl synthase</fullName>
        <ecNumber evidence="1">2.8.1.8</ecNumber>
    </recommendedName>
    <alternativeName>
        <fullName evidence="1">Lip-syn</fullName>
        <shortName evidence="1">LS</shortName>
    </alternativeName>
    <alternativeName>
        <fullName evidence="1">Lipoate synthase</fullName>
    </alternativeName>
    <alternativeName>
        <fullName evidence="1">Lipoic acid synthase</fullName>
    </alternativeName>
    <alternativeName>
        <fullName evidence="1">Sulfur insertion protein LipA</fullName>
    </alternativeName>
</protein>
<feature type="chain" id="PRO_1000012228" description="Lipoyl synthase">
    <location>
        <begin position="1"/>
        <end position="320"/>
    </location>
</feature>
<feature type="domain" description="Radical SAM core" evidence="2">
    <location>
        <begin position="79"/>
        <end position="296"/>
    </location>
</feature>
<feature type="binding site" evidence="1">
    <location>
        <position position="67"/>
    </location>
    <ligand>
        <name>[4Fe-4S] cluster</name>
        <dbReference type="ChEBI" id="CHEBI:49883"/>
        <label>1</label>
    </ligand>
</feature>
<feature type="binding site" evidence="1">
    <location>
        <position position="72"/>
    </location>
    <ligand>
        <name>[4Fe-4S] cluster</name>
        <dbReference type="ChEBI" id="CHEBI:49883"/>
        <label>1</label>
    </ligand>
</feature>
<feature type="binding site" evidence="1">
    <location>
        <position position="78"/>
    </location>
    <ligand>
        <name>[4Fe-4S] cluster</name>
        <dbReference type="ChEBI" id="CHEBI:49883"/>
        <label>1</label>
    </ligand>
</feature>
<feature type="binding site" evidence="1">
    <location>
        <position position="93"/>
    </location>
    <ligand>
        <name>[4Fe-4S] cluster</name>
        <dbReference type="ChEBI" id="CHEBI:49883"/>
        <label>2</label>
        <note>4Fe-4S-S-AdoMet</note>
    </ligand>
</feature>
<feature type="binding site" evidence="1">
    <location>
        <position position="97"/>
    </location>
    <ligand>
        <name>[4Fe-4S] cluster</name>
        <dbReference type="ChEBI" id="CHEBI:49883"/>
        <label>2</label>
        <note>4Fe-4S-S-AdoMet</note>
    </ligand>
</feature>
<feature type="binding site" evidence="1">
    <location>
        <position position="100"/>
    </location>
    <ligand>
        <name>[4Fe-4S] cluster</name>
        <dbReference type="ChEBI" id="CHEBI:49883"/>
        <label>2</label>
        <note>4Fe-4S-S-AdoMet</note>
    </ligand>
</feature>
<feature type="binding site" evidence="1">
    <location>
        <position position="307"/>
    </location>
    <ligand>
        <name>[4Fe-4S] cluster</name>
        <dbReference type="ChEBI" id="CHEBI:49883"/>
        <label>1</label>
    </ligand>
</feature>
<sequence length="320" mass="36129">MSTPFKMERGVKYRDAAKTSIIPVKNIDPNQDLLKKPEWMKIKLPASSAKIESIKNGMRRHGLHSVCEEASCPNLHECFNHGTATFMILGAICTRRCPFCDVAHGKPLPPDPEEPQKLAETIQDMKLKYVVITSVDRDDLPDRGAGHFSECVKAVRELNPNIKIEILVPDFRGRVTQALEKLKDNPPDVFNHNLENVPRLYKEIRPGADYGWSLKLLREFKEMFPNIPTKSGLMVGLGETNEEILQVMQDLRDNGVTMLTLGQYLQPSRHHLPVARYVPPTEFDEFRDKANEMGFEHAACGPFVRSSYHADLQASGGLVK</sequence>
<keyword id="KW-0004">4Fe-4S</keyword>
<keyword id="KW-0963">Cytoplasm</keyword>
<keyword id="KW-0408">Iron</keyword>
<keyword id="KW-0411">Iron-sulfur</keyword>
<keyword id="KW-0479">Metal-binding</keyword>
<keyword id="KW-0949">S-adenosyl-L-methionine</keyword>
<keyword id="KW-0808">Transferase</keyword>
<reference key="1">
    <citation type="journal article" date="2007" name="Genome Biol.">
        <title>Characterization and modeling of the Haemophilus influenzae core and supragenomes based on the complete genomic sequences of Rd and 12 clinical nontypeable strains.</title>
        <authorList>
            <person name="Hogg J.S."/>
            <person name="Hu F.Z."/>
            <person name="Janto B."/>
            <person name="Boissy R."/>
            <person name="Hayes J."/>
            <person name="Keefe R."/>
            <person name="Post J.C."/>
            <person name="Ehrlich G.D."/>
        </authorList>
    </citation>
    <scope>NUCLEOTIDE SEQUENCE [LARGE SCALE GENOMIC DNA]</scope>
    <source>
        <strain>PittEE</strain>
    </source>
</reference>